<evidence type="ECO:0000255" key="1">
    <source>
        <dbReference type="HAMAP-Rule" id="MF_01658"/>
    </source>
</evidence>
<evidence type="ECO:0000305" key="2"/>
<name>COQ7_BORPA</name>
<feature type="chain" id="PRO_0000338659" description="3-demethoxyubiquinol 3-hydroxylase">
    <location>
        <begin position="1"/>
        <end position="222"/>
    </location>
</feature>
<feature type="binding site" evidence="1">
    <location>
        <position position="71"/>
    </location>
    <ligand>
        <name>Fe cation</name>
        <dbReference type="ChEBI" id="CHEBI:24875"/>
        <label>1</label>
    </ligand>
</feature>
<feature type="binding site" evidence="1">
    <location>
        <position position="101"/>
    </location>
    <ligand>
        <name>Fe cation</name>
        <dbReference type="ChEBI" id="CHEBI:24875"/>
        <label>1</label>
    </ligand>
</feature>
<feature type="binding site" evidence="1">
    <location>
        <position position="101"/>
    </location>
    <ligand>
        <name>Fe cation</name>
        <dbReference type="ChEBI" id="CHEBI:24875"/>
        <label>2</label>
    </ligand>
</feature>
<feature type="binding site" evidence="1">
    <location>
        <position position="104"/>
    </location>
    <ligand>
        <name>Fe cation</name>
        <dbReference type="ChEBI" id="CHEBI:24875"/>
        <label>1</label>
    </ligand>
</feature>
<feature type="binding site" evidence="1">
    <location>
        <position position="153"/>
    </location>
    <ligand>
        <name>Fe cation</name>
        <dbReference type="ChEBI" id="CHEBI:24875"/>
        <label>2</label>
    </ligand>
</feature>
<feature type="binding site" evidence="1">
    <location>
        <position position="185"/>
    </location>
    <ligand>
        <name>Fe cation</name>
        <dbReference type="ChEBI" id="CHEBI:24875"/>
        <label>1</label>
    </ligand>
</feature>
<feature type="binding site" evidence="1">
    <location>
        <position position="185"/>
    </location>
    <ligand>
        <name>Fe cation</name>
        <dbReference type="ChEBI" id="CHEBI:24875"/>
        <label>2</label>
    </ligand>
</feature>
<feature type="binding site" evidence="1">
    <location>
        <position position="188"/>
    </location>
    <ligand>
        <name>Fe cation</name>
        <dbReference type="ChEBI" id="CHEBI:24875"/>
        <label>2</label>
    </ligand>
</feature>
<reference key="1">
    <citation type="journal article" date="2003" name="Nat. Genet.">
        <title>Comparative analysis of the genome sequences of Bordetella pertussis, Bordetella parapertussis and Bordetella bronchiseptica.</title>
        <authorList>
            <person name="Parkhill J."/>
            <person name="Sebaihia M."/>
            <person name="Preston A."/>
            <person name="Murphy L.D."/>
            <person name="Thomson N.R."/>
            <person name="Harris D.E."/>
            <person name="Holden M.T.G."/>
            <person name="Churcher C.M."/>
            <person name="Bentley S.D."/>
            <person name="Mungall K.L."/>
            <person name="Cerdeno-Tarraga A.-M."/>
            <person name="Temple L."/>
            <person name="James K.D."/>
            <person name="Harris B."/>
            <person name="Quail M.A."/>
            <person name="Achtman M."/>
            <person name="Atkin R."/>
            <person name="Baker S."/>
            <person name="Basham D."/>
            <person name="Bason N."/>
            <person name="Cherevach I."/>
            <person name="Chillingworth T."/>
            <person name="Collins M."/>
            <person name="Cronin A."/>
            <person name="Davis P."/>
            <person name="Doggett J."/>
            <person name="Feltwell T."/>
            <person name="Goble A."/>
            <person name="Hamlin N."/>
            <person name="Hauser H."/>
            <person name="Holroyd S."/>
            <person name="Jagels K."/>
            <person name="Leather S."/>
            <person name="Moule S."/>
            <person name="Norberczak H."/>
            <person name="O'Neil S."/>
            <person name="Ormond D."/>
            <person name="Price C."/>
            <person name="Rabbinowitsch E."/>
            <person name="Rutter S."/>
            <person name="Sanders M."/>
            <person name="Saunders D."/>
            <person name="Seeger K."/>
            <person name="Sharp S."/>
            <person name="Simmonds M."/>
            <person name="Skelton J."/>
            <person name="Squares R."/>
            <person name="Squares S."/>
            <person name="Stevens K."/>
            <person name="Unwin L."/>
            <person name="Whitehead S."/>
            <person name="Barrell B.G."/>
            <person name="Maskell D.J."/>
        </authorList>
    </citation>
    <scope>NUCLEOTIDE SEQUENCE [LARGE SCALE GENOMIC DNA]</scope>
    <source>
        <strain>12822 / ATCC BAA-587 / NCTC 13253</strain>
    </source>
</reference>
<keyword id="KW-1003">Cell membrane</keyword>
<keyword id="KW-0408">Iron</keyword>
<keyword id="KW-0472">Membrane</keyword>
<keyword id="KW-0479">Metal-binding</keyword>
<keyword id="KW-0503">Monooxygenase</keyword>
<keyword id="KW-0560">Oxidoreductase</keyword>
<keyword id="KW-0831">Ubiquinone biosynthesis</keyword>
<sequence>MSTSSSASALGRRAGPLDGLIGEIDRALRVLSGAATAARPYPAQAPEAPDALSERERRHAAGLMRVNHVGEVCAQALYRGQAAACREPAARELLRQAAAEEVDHLAWCNERLRELGSRPSLLNPFWYTGSFALGVLASYAGVPRNLGFMAETERQVEAHLDGHLRTLPVQDRRSRDIVQKMKEDEAQHRASAERAGGVPLPAPVRGAMRAMSKVMTSTAYWL</sequence>
<comment type="function">
    <text evidence="1">Catalyzes the hydroxylation of 2-nonaprenyl-3-methyl-6-methoxy-1,4-benzoquinol during ubiquinone biosynthesis.</text>
</comment>
<comment type="catalytic activity">
    <reaction evidence="1">
        <text>a 5-methoxy-2-methyl-3-(all-trans-polyprenyl)benzene-1,4-diol + AH2 + O2 = a 3-demethylubiquinol + A + H2O</text>
        <dbReference type="Rhea" id="RHEA:50908"/>
        <dbReference type="Rhea" id="RHEA-COMP:10859"/>
        <dbReference type="Rhea" id="RHEA-COMP:10914"/>
        <dbReference type="ChEBI" id="CHEBI:13193"/>
        <dbReference type="ChEBI" id="CHEBI:15377"/>
        <dbReference type="ChEBI" id="CHEBI:15379"/>
        <dbReference type="ChEBI" id="CHEBI:17499"/>
        <dbReference type="ChEBI" id="CHEBI:84167"/>
        <dbReference type="ChEBI" id="CHEBI:84422"/>
        <dbReference type="EC" id="1.14.99.60"/>
    </reaction>
</comment>
<comment type="cofactor">
    <cofactor evidence="1">
        <name>Fe cation</name>
        <dbReference type="ChEBI" id="CHEBI:24875"/>
    </cofactor>
    <text evidence="1">Binds 2 iron ions per subunit.</text>
</comment>
<comment type="pathway">
    <text evidence="1">Cofactor biosynthesis; ubiquinone biosynthesis.</text>
</comment>
<comment type="subcellular location">
    <subcellularLocation>
        <location evidence="1">Cell membrane</location>
        <topology evidence="1">Peripheral membrane protein</topology>
    </subcellularLocation>
</comment>
<comment type="similarity">
    <text evidence="1">Belongs to the COQ7 family.</text>
</comment>
<comment type="sequence caution" evidence="2">
    <conflict type="erroneous initiation">
        <sequence resource="EMBL-CDS" id="CAE40198"/>
    </conflict>
</comment>
<proteinExistence type="inferred from homology"/>
<gene>
    <name evidence="1" type="primary">coq7</name>
    <name type="ordered locus">BPP0789</name>
</gene>
<accession>Q7W1A7</accession>
<dbReference type="EC" id="1.14.99.60" evidence="1"/>
<dbReference type="EMBL" id="BX640425">
    <property type="protein sequence ID" value="CAE40198.1"/>
    <property type="status" value="ALT_INIT"/>
    <property type="molecule type" value="Genomic_DNA"/>
</dbReference>
<dbReference type="RefSeq" id="WP_003808447.1">
    <property type="nucleotide sequence ID" value="NC_002928.3"/>
</dbReference>
<dbReference type="SMR" id="Q7W1A7"/>
<dbReference type="GeneID" id="93202539"/>
<dbReference type="KEGG" id="bpa:BPP0789"/>
<dbReference type="HOGENOM" id="CLU_088601_0_0_4"/>
<dbReference type="UniPathway" id="UPA00232"/>
<dbReference type="Proteomes" id="UP000001421">
    <property type="component" value="Chromosome"/>
</dbReference>
<dbReference type="GO" id="GO:0005886">
    <property type="term" value="C:plasma membrane"/>
    <property type="evidence" value="ECO:0007669"/>
    <property type="project" value="UniProtKB-SubCell"/>
</dbReference>
<dbReference type="GO" id="GO:0008682">
    <property type="term" value="F:3-demethoxyubiquinol 3-hydroxylase activity"/>
    <property type="evidence" value="ECO:0007669"/>
    <property type="project" value="UniProtKB-EC"/>
</dbReference>
<dbReference type="GO" id="GO:0046872">
    <property type="term" value="F:metal ion binding"/>
    <property type="evidence" value="ECO:0007669"/>
    <property type="project" value="UniProtKB-KW"/>
</dbReference>
<dbReference type="GO" id="GO:0006744">
    <property type="term" value="P:ubiquinone biosynthetic process"/>
    <property type="evidence" value="ECO:0007669"/>
    <property type="project" value="UniProtKB-UniRule"/>
</dbReference>
<dbReference type="CDD" id="cd01042">
    <property type="entry name" value="DMQH"/>
    <property type="match status" value="1"/>
</dbReference>
<dbReference type="Gene3D" id="1.20.1260.10">
    <property type="match status" value="1"/>
</dbReference>
<dbReference type="HAMAP" id="MF_01658">
    <property type="entry name" value="COQ7"/>
    <property type="match status" value="1"/>
</dbReference>
<dbReference type="InterPro" id="IPR047809">
    <property type="entry name" value="COQ7_proteobact"/>
</dbReference>
<dbReference type="InterPro" id="IPR012347">
    <property type="entry name" value="Ferritin-like"/>
</dbReference>
<dbReference type="InterPro" id="IPR009078">
    <property type="entry name" value="Ferritin-like_SF"/>
</dbReference>
<dbReference type="InterPro" id="IPR011566">
    <property type="entry name" value="Ubq_synth_Coq7"/>
</dbReference>
<dbReference type="NCBIfam" id="NF033656">
    <property type="entry name" value="DMQ_monoox_COQ7"/>
    <property type="match status" value="1"/>
</dbReference>
<dbReference type="PANTHER" id="PTHR11237:SF4">
    <property type="entry name" value="5-DEMETHOXYUBIQUINONE HYDROXYLASE, MITOCHONDRIAL"/>
    <property type="match status" value="1"/>
</dbReference>
<dbReference type="PANTHER" id="PTHR11237">
    <property type="entry name" value="COENZYME Q10 BIOSYNTHESIS PROTEIN 7"/>
    <property type="match status" value="1"/>
</dbReference>
<dbReference type="Pfam" id="PF03232">
    <property type="entry name" value="COQ7"/>
    <property type="match status" value="1"/>
</dbReference>
<dbReference type="SUPFAM" id="SSF47240">
    <property type="entry name" value="Ferritin-like"/>
    <property type="match status" value="1"/>
</dbReference>
<protein>
    <recommendedName>
        <fullName evidence="1">3-demethoxyubiquinol 3-hydroxylase</fullName>
        <shortName evidence="1">DMQ hydroxylase</shortName>
        <ecNumber evidence="1">1.14.99.60</ecNumber>
    </recommendedName>
    <alternativeName>
        <fullName evidence="1">2-nonaprenyl-3-methyl-6-methoxy-1,4-benzoquinol hydroxylase</fullName>
    </alternativeName>
</protein>
<organism>
    <name type="scientific">Bordetella parapertussis (strain 12822 / ATCC BAA-587 / NCTC 13253)</name>
    <dbReference type="NCBI Taxonomy" id="257311"/>
    <lineage>
        <taxon>Bacteria</taxon>
        <taxon>Pseudomonadati</taxon>
        <taxon>Pseudomonadota</taxon>
        <taxon>Betaproteobacteria</taxon>
        <taxon>Burkholderiales</taxon>
        <taxon>Alcaligenaceae</taxon>
        <taxon>Bordetella</taxon>
    </lineage>
</organism>